<dbReference type="EC" id="2.1.1.177" evidence="1"/>
<dbReference type="EMBL" id="AP010904">
    <property type="protein sequence ID" value="BAH75817.1"/>
    <property type="molecule type" value="Genomic_DNA"/>
</dbReference>
<dbReference type="RefSeq" id="WP_015860999.1">
    <property type="nucleotide sequence ID" value="NC_012796.1"/>
</dbReference>
<dbReference type="SMR" id="C4XSX5"/>
<dbReference type="STRING" id="573370.DMR_23260"/>
<dbReference type="KEGG" id="dma:DMR_23260"/>
<dbReference type="eggNOG" id="COG1576">
    <property type="taxonomic scope" value="Bacteria"/>
</dbReference>
<dbReference type="HOGENOM" id="CLU_100552_1_0_7"/>
<dbReference type="OrthoDB" id="9806643at2"/>
<dbReference type="Proteomes" id="UP000009071">
    <property type="component" value="Chromosome"/>
</dbReference>
<dbReference type="GO" id="GO:0005737">
    <property type="term" value="C:cytoplasm"/>
    <property type="evidence" value="ECO:0007669"/>
    <property type="project" value="UniProtKB-SubCell"/>
</dbReference>
<dbReference type="GO" id="GO:0070038">
    <property type="term" value="F:rRNA (pseudouridine-N3-)-methyltransferase activity"/>
    <property type="evidence" value="ECO:0007669"/>
    <property type="project" value="UniProtKB-UniRule"/>
</dbReference>
<dbReference type="CDD" id="cd18081">
    <property type="entry name" value="RlmH-like"/>
    <property type="match status" value="1"/>
</dbReference>
<dbReference type="Gene3D" id="3.40.1280.10">
    <property type="match status" value="1"/>
</dbReference>
<dbReference type="HAMAP" id="MF_00658">
    <property type="entry name" value="23SrRNA_methyltr_H"/>
    <property type="match status" value="1"/>
</dbReference>
<dbReference type="InterPro" id="IPR029028">
    <property type="entry name" value="Alpha/beta_knot_MTases"/>
</dbReference>
<dbReference type="InterPro" id="IPR003742">
    <property type="entry name" value="RlmH-like"/>
</dbReference>
<dbReference type="InterPro" id="IPR029026">
    <property type="entry name" value="tRNA_m1G_MTases_N"/>
</dbReference>
<dbReference type="PANTHER" id="PTHR33603">
    <property type="entry name" value="METHYLTRANSFERASE"/>
    <property type="match status" value="1"/>
</dbReference>
<dbReference type="PANTHER" id="PTHR33603:SF1">
    <property type="entry name" value="RIBOSOMAL RNA LARGE SUBUNIT METHYLTRANSFERASE H"/>
    <property type="match status" value="1"/>
</dbReference>
<dbReference type="Pfam" id="PF02590">
    <property type="entry name" value="SPOUT_MTase"/>
    <property type="match status" value="1"/>
</dbReference>
<dbReference type="PIRSF" id="PIRSF004505">
    <property type="entry name" value="MT_bac"/>
    <property type="match status" value="1"/>
</dbReference>
<dbReference type="SUPFAM" id="SSF75217">
    <property type="entry name" value="alpha/beta knot"/>
    <property type="match status" value="1"/>
</dbReference>
<sequence>MKPLRLIAVGQVRTPYFREACAHYLTAVRRYLPAEEILARDGKSADPARRKAEEAKAVLAALAPRDFVVVLDEHGPSLPSTELAALLKKRIEDPGRAPAFVIGGPFGLDKAVLDRADRLLALGPGTLPHELARVVLYEQLYRAASINAGAPYHH</sequence>
<organism>
    <name type="scientific">Solidesulfovibrio magneticus (strain ATCC 700980 / DSM 13731 / RS-1)</name>
    <name type="common">Desulfovibrio magneticus</name>
    <dbReference type="NCBI Taxonomy" id="573370"/>
    <lineage>
        <taxon>Bacteria</taxon>
        <taxon>Pseudomonadati</taxon>
        <taxon>Thermodesulfobacteriota</taxon>
        <taxon>Desulfovibrionia</taxon>
        <taxon>Desulfovibrionales</taxon>
        <taxon>Desulfovibrionaceae</taxon>
        <taxon>Solidesulfovibrio</taxon>
    </lineage>
</organism>
<reference key="1">
    <citation type="journal article" date="2009" name="Genome Res.">
        <title>Whole genome sequence of Desulfovibrio magneticus strain RS-1 revealed common gene clusters in magnetotactic bacteria.</title>
        <authorList>
            <person name="Nakazawa H."/>
            <person name="Arakaki A."/>
            <person name="Narita-Yamada S."/>
            <person name="Yashiro I."/>
            <person name="Jinno K."/>
            <person name="Aoki N."/>
            <person name="Tsuruyama A."/>
            <person name="Okamura Y."/>
            <person name="Tanikawa S."/>
            <person name="Fujita N."/>
            <person name="Takeyama H."/>
            <person name="Matsunaga T."/>
        </authorList>
    </citation>
    <scope>NUCLEOTIDE SEQUENCE [LARGE SCALE GENOMIC DNA]</scope>
    <source>
        <strain>ATCC 700980 / DSM 13731 / RS-1</strain>
    </source>
</reference>
<feature type="chain" id="PRO_1000212449" description="Ribosomal RNA large subunit methyltransferase H">
    <location>
        <begin position="1"/>
        <end position="154"/>
    </location>
</feature>
<feature type="binding site" evidence="1">
    <location>
        <position position="71"/>
    </location>
    <ligand>
        <name>S-adenosyl-L-methionine</name>
        <dbReference type="ChEBI" id="CHEBI:59789"/>
    </ligand>
</feature>
<feature type="binding site" evidence="1">
    <location>
        <position position="103"/>
    </location>
    <ligand>
        <name>S-adenosyl-L-methionine</name>
        <dbReference type="ChEBI" id="CHEBI:59789"/>
    </ligand>
</feature>
<comment type="function">
    <text evidence="1">Specifically methylates the pseudouridine at position 1915 (m3Psi1915) in 23S rRNA.</text>
</comment>
<comment type="catalytic activity">
    <reaction evidence="1">
        <text>pseudouridine(1915) in 23S rRNA + S-adenosyl-L-methionine = N(3)-methylpseudouridine(1915) in 23S rRNA + S-adenosyl-L-homocysteine + H(+)</text>
        <dbReference type="Rhea" id="RHEA:42752"/>
        <dbReference type="Rhea" id="RHEA-COMP:10221"/>
        <dbReference type="Rhea" id="RHEA-COMP:10222"/>
        <dbReference type="ChEBI" id="CHEBI:15378"/>
        <dbReference type="ChEBI" id="CHEBI:57856"/>
        <dbReference type="ChEBI" id="CHEBI:59789"/>
        <dbReference type="ChEBI" id="CHEBI:65314"/>
        <dbReference type="ChEBI" id="CHEBI:74486"/>
        <dbReference type="EC" id="2.1.1.177"/>
    </reaction>
</comment>
<comment type="subunit">
    <text evidence="1">Homodimer.</text>
</comment>
<comment type="subcellular location">
    <subcellularLocation>
        <location evidence="1">Cytoplasm</location>
    </subcellularLocation>
</comment>
<comment type="similarity">
    <text evidence="1">Belongs to the RNA methyltransferase RlmH family.</text>
</comment>
<accession>C4XSX5</accession>
<proteinExistence type="inferred from homology"/>
<protein>
    <recommendedName>
        <fullName evidence="1">Ribosomal RNA large subunit methyltransferase H</fullName>
        <ecNumber evidence="1">2.1.1.177</ecNumber>
    </recommendedName>
    <alternativeName>
        <fullName evidence="1">23S rRNA (pseudouridine1915-N3)-methyltransferase</fullName>
    </alternativeName>
    <alternativeName>
        <fullName evidence="1">23S rRNA m3Psi1915 methyltransferase</fullName>
    </alternativeName>
    <alternativeName>
        <fullName evidence="1">rRNA (pseudouridine-N3-)-methyltransferase RlmH</fullName>
    </alternativeName>
</protein>
<evidence type="ECO:0000255" key="1">
    <source>
        <dbReference type="HAMAP-Rule" id="MF_00658"/>
    </source>
</evidence>
<gene>
    <name evidence="1" type="primary">rlmH</name>
    <name type="ordered locus">DMR_23260</name>
</gene>
<keyword id="KW-0963">Cytoplasm</keyword>
<keyword id="KW-0489">Methyltransferase</keyword>
<keyword id="KW-0698">rRNA processing</keyword>
<keyword id="KW-0949">S-adenosyl-L-methionine</keyword>
<keyword id="KW-0808">Transferase</keyword>
<name>RLMH_SOLM1</name>